<organism>
    <name type="scientific">Psychrobacter sp. (strain PRwf-1)</name>
    <dbReference type="NCBI Taxonomy" id="349106"/>
    <lineage>
        <taxon>Bacteria</taxon>
        <taxon>Pseudomonadati</taxon>
        <taxon>Pseudomonadota</taxon>
        <taxon>Gammaproteobacteria</taxon>
        <taxon>Moraxellales</taxon>
        <taxon>Moraxellaceae</taxon>
        <taxon>Psychrobacter</taxon>
    </lineage>
</organism>
<keyword id="KW-0131">Cell cycle</keyword>
<keyword id="KW-0132">Cell division</keyword>
<keyword id="KW-0143">Chaperone</keyword>
<keyword id="KW-0963">Cytoplasm</keyword>
<keyword id="KW-0413">Isomerase</keyword>
<keyword id="KW-0697">Rotamase</keyword>
<dbReference type="EC" id="5.2.1.8" evidence="1"/>
<dbReference type="EMBL" id="CP000713">
    <property type="protein sequence ID" value="ABQ93262.1"/>
    <property type="molecule type" value="Genomic_DNA"/>
</dbReference>
<dbReference type="SMR" id="A5WC71"/>
<dbReference type="STRING" id="349106.PsycPRwf_0307"/>
<dbReference type="KEGG" id="prw:PsycPRwf_0307"/>
<dbReference type="eggNOG" id="COG0544">
    <property type="taxonomic scope" value="Bacteria"/>
</dbReference>
<dbReference type="HOGENOM" id="CLU_033058_2_0_6"/>
<dbReference type="GO" id="GO:0005737">
    <property type="term" value="C:cytoplasm"/>
    <property type="evidence" value="ECO:0007669"/>
    <property type="project" value="UniProtKB-SubCell"/>
</dbReference>
<dbReference type="GO" id="GO:0003755">
    <property type="term" value="F:peptidyl-prolyl cis-trans isomerase activity"/>
    <property type="evidence" value="ECO:0007669"/>
    <property type="project" value="UniProtKB-UniRule"/>
</dbReference>
<dbReference type="GO" id="GO:0044183">
    <property type="term" value="F:protein folding chaperone"/>
    <property type="evidence" value="ECO:0007669"/>
    <property type="project" value="TreeGrafter"/>
</dbReference>
<dbReference type="GO" id="GO:0043022">
    <property type="term" value="F:ribosome binding"/>
    <property type="evidence" value="ECO:0007669"/>
    <property type="project" value="TreeGrafter"/>
</dbReference>
<dbReference type="GO" id="GO:0051083">
    <property type="term" value="P:'de novo' cotranslational protein folding"/>
    <property type="evidence" value="ECO:0007669"/>
    <property type="project" value="TreeGrafter"/>
</dbReference>
<dbReference type="GO" id="GO:0051301">
    <property type="term" value="P:cell division"/>
    <property type="evidence" value="ECO:0007669"/>
    <property type="project" value="UniProtKB-KW"/>
</dbReference>
<dbReference type="GO" id="GO:0061077">
    <property type="term" value="P:chaperone-mediated protein folding"/>
    <property type="evidence" value="ECO:0007669"/>
    <property type="project" value="TreeGrafter"/>
</dbReference>
<dbReference type="GO" id="GO:0015031">
    <property type="term" value="P:protein transport"/>
    <property type="evidence" value="ECO:0007669"/>
    <property type="project" value="UniProtKB-UniRule"/>
</dbReference>
<dbReference type="GO" id="GO:0043335">
    <property type="term" value="P:protein unfolding"/>
    <property type="evidence" value="ECO:0007669"/>
    <property type="project" value="TreeGrafter"/>
</dbReference>
<dbReference type="FunFam" id="3.10.50.40:FF:000001">
    <property type="entry name" value="Trigger factor"/>
    <property type="match status" value="1"/>
</dbReference>
<dbReference type="Gene3D" id="3.10.50.40">
    <property type="match status" value="1"/>
</dbReference>
<dbReference type="Gene3D" id="3.30.70.1050">
    <property type="entry name" value="Trigger factor ribosome-binding domain"/>
    <property type="match status" value="1"/>
</dbReference>
<dbReference type="Gene3D" id="1.10.3120.10">
    <property type="entry name" value="Trigger factor, C-terminal domain"/>
    <property type="match status" value="1"/>
</dbReference>
<dbReference type="HAMAP" id="MF_00303">
    <property type="entry name" value="Trigger_factor_Tig"/>
    <property type="match status" value="1"/>
</dbReference>
<dbReference type="InterPro" id="IPR046357">
    <property type="entry name" value="PPIase_dom_sf"/>
</dbReference>
<dbReference type="InterPro" id="IPR001179">
    <property type="entry name" value="PPIase_FKBP_dom"/>
</dbReference>
<dbReference type="InterPro" id="IPR005215">
    <property type="entry name" value="Trig_fac"/>
</dbReference>
<dbReference type="InterPro" id="IPR008880">
    <property type="entry name" value="Trigger_fac_C"/>
</dbReference>
<dbReference type="InterPro" id="IPR037041">
    <property type="entry name" value="Trigger_fac_C_sf"/>
</dbReference>
<dbReference type="InterPro" id="IPR008881">
    <property type="entry name" value="Trigger_fac_ribosome-bd_bac"/>
</dbReference>
<dbReference type="InterPro" id="IPR036611">
    <property type="entry name" value="Trigger_fac_ribosome-bd_sf"/>
</dbReference>
<dbReference type="InterPro" id="IPR027304">
    <property type="entry name" value="Trigger_fact/SurA_dom_sf"/>
</dbReference>
<dbReference type="NCBIfam" id="TIGR00115">
    <property type="entry name" value="tig"/>
    <property type="match status" value="1"/>
</dbReference>
<dbReference type="PANTHER" id="PTHR30560">
    <property type="entry name" value="TRIGGER FACTOR CHAPERONE AND PEPTIDYL-PROLYL CIS/TRANS ISOMERASE"/>
    <property type="match status" value="1"/>
</dbReference>
<dbReference type="PANTHER" id="PTHR30560:SF3">
    <property type="entry name" value="TRIGGER FACTOR-LIKE PROTEIN TIG, CHLOROPLASTIC"/>
    <property type="match status" value="1"/>
</dbReference>
<dbReference type="Pfam" id="PF00254">
    <property type="entry name" value="FKBP_C"/>
    <property type="match status" value="1"/>
</dbReference>
<dbReference type="Pfam" id="PF05698">
    <property type="entry name" value="Trigger_C"/>
    <property type="match status" value="1"/>
</dbReference>
<dbReference type="Pfam" id="PF05697">
    <property type="entry name" value="Trigger_N"/>
    <property type="match status" value="1"/>
</dbReference>
<dbReference type="PIRSF" id="PIRSF003095">
    <property type="entry name" value="Trigger_factor"/>
    <property type="match status" value="1"/>
</dbReference>
<dbReference type="SUPFAM" id="SSF54534">
    <property type="entry name" value="FKBP-like"/>
    <property type="match status" value="1"/>
</dbReference>
<dbReference type="SUPFAM" id="SSF109998">
    <property type="entry name" value="Triger factor/SurA peptide-binding domain-like"/>
    <property type="match status" value="1"/>
</dbReference>
<dbReference type="SUPFAM" id="SSF102735">
    <property type="entry name" value="Trigger factor ribosome-binding domain"/>
    <property type="match status" value="1"/>
</dbReference>
<dbReference type="PROSITE" id="PS50059">
    <property type="entry name" value="FKBP_PPIASE"/>
    <property type="match status" value="1"/>
</dbReference>
<reference key="1">
    <citation type="submission" date="2007-05" db="EMBL/GenBank/DDBJ databases">
        <title>Complete sequence of chromosome of Psychrobacter sp. PRwf-1.</title>
        <authorList>
            <consortium name="US DOE Joint Genome Institute"/>
            <person name="Copeland A."/>
            <person name="Lucas S."/>
            <person name="Lapidus A."/>
            <person name="Barry K."/>
            <person name="Detter J.C."/>
            <person name="Glavina del Rio T."/>
            <person name="Hammon N."/>
            <person name="Israni S."/>
            <person name="Dalin E."/>
            <person name="Tice H."/>
            <person name="Pitluck S."/>
            <person name="Chain P."/>
            <person name="Malfatti S."/>
            <person name="Shin M."/>
            <person name="Vergez L."/>
            <person name="Schmutz J."/>
            <person name="Larimer F."/>
            <person name="Land M."/>
            <person name="Hauser L."/>
            <person name="Kyrpides N."/>
            <person name="Kim E."/>
            <person name="Tiedje J."/>
            <person name="Richardson P."/>
        </authorList>
    </citation>
    <scope>NUCLEOTIDE SEQUENCE [LARGE SCALE GENOMIC DNA]</scope>
    <source>
        <strain>PRwf-1</strain>
    </source>
</reference>
<name>TIG_PSYWF</name>
<protein>
    <recommendedName>
        <fullName evidence="1">Trigger factor</fullName>
        <shortName evidence="1">TF</shortName>
        <ecNumber evidence="1">5.2.1.8</ecNumber>
    </recommendedName>
    <alternativeName>
        <fullName evidence="1">PPIase</fullName>
    </alternativeName>
</protein>
<feature type="chain" id="PRO_1000071988" description="Trigger factor">
    <location>
        <begin position="1"/>
        <end position="445"/>
    </location>
</feature>
<feature type="domain" description="PPIase FKBP-type" evidence="1">
    <location>
        <begin position="164"/>
        <end position="249"/>
    </location>
</feature>
<proteinExistence type="inferred from homology"/>
<comment type="function">
    <text evidence="1">Involved in protein export. Acts as a chaperone by maintaining the newly synthesized protein in an open conformation. Functions as a peptidyl-prolyl cis-trans isomerase.</text>
</comment>
<comment type="catalytic activity">
    <reaction evidence="1">
        <text>[protein]-peptidylproline (omega=180) = [protein]-peptidylproline (omega=0)</text>
        <dbReference type="Rhea" id="RHEA:16237"/>
        <dbReference type="Rhea" id="RHEA-COMP:10747"/>
        <dbReference type="Rhea" id="RHEA-COMP:10748"/>
        <dbReference type="ChEBI" id="CHEBI:83833"/>
        <dbReference type="ChEBI" id="CHEBI:83834"/>
        <dbReference type="EC" id="5.2.1.8"/>
    </reaction>
</comment>
<comment type="subcellular location">
    <subcellularLocation>
        <location>Cytoplasm</location>
    </subcellularLocation>
    <text evidence="1">About half TF is bound to the ribosome near the polypeptide exit tunnel while the other half is free in the cytoplasm.</text>
</comment>
<comment type="domain">
    <text evidence="1">Consists of 3 domains; the N-terminus binds the ribosome, the middle domain has PPIase activity, while the C-terminus has intrinsic chaperone activity on its own.</text>
</comment>
<comment type="similarity">
    <text evidence="1">Belongs to the FKBP-type PPIase family. Tig subfamily.</text>
</comment>
<evidence type="ECO:0000255" key="1">
    <source>
        <dbReference type="HAMAP-Rule" id="MF_00303"/>
    </source>
</evidence>
<accession>A5WC71</accession>
<gene>
    <name evidence="1" type="primary">tig</name>
    <name type="ordered locus">PsycPRwf_0307</name>
</gene>
<sequence length="445" mass="50188">MAKDLQVTTSKVNDNQTQLTVKVPVEQIQNKVEGRIRNVAKTAKIDGFRKGKVPVSHIRAQYGAGIQQEVINDVIRDTVFEAIKAEDVRAVGMPNIDDVKLEDEFLVYQATVEIFPEIKVEGMSDIEVERHTATITDEDVDTMIENLRKQRQEFAEKEGAADEGDQVTFDFEGSIDGEKFEGGSAEDFKLVLGSGQMIPGFEDGIKGLAAGEEKTIDVTFPEDYQAENLAGKEAQFKINVKKVEEAKLPEINDEFLELFGVKEGGVEQLKTDVRKNMTREIKNAARNQVKQAAFDALLEKNEFDVPSAMVDQEVDRQRNLMMQRFAQQFGGNANSIDKDMLPRELFEEQAIRAARLGVLVSRVIEENDLKVDQERVETFIKETAENYEDPQEVIEYYTNDAQQRANIESVVLEDQVVDFLLEQGKVTDKEVGYQELLASQQQGMM</sequence>